<protein>
    <recommendedName>
        <fullName evidence="21">Acyl-CoA desaturase 1</fullName>
        <ecNumber evidence="4 7 8 13 14 17">1.14.19.1</ecNumber>
    </recommendedName>
    <alternativeName>
        <fullName evidence="20">Delta(9)-desaturase 1</fullName>
        <shortName evidence="20">Delta-9 desaturase 1</shortName>
    </alternativeName>
    <alternativeName>
        <fullName>Fatty acid desaturase 1</fullName>
    </alternativeName>
    <alternativeName>
        <fullName evidence="18 19">Stearoyl-CoA desaturase 1</fullName>
    </alternativeName>
</protein>
<comment type="function">
    <text evidence="4 6 7 8 9 11 13 14 15 17 24 25">Stearoyl-CoA desaturase that utilizes O(2) and electrons from reduced cytochrome b5 to introduce the first double bond into saturated fatty acyl-CoA substrates. Catalyzes the insertion of a cis double bond at the Delta-9 position into fatty acyl-CoA substrates including palmitoyl-CoA and stearoyl-CoA (PubMed:11500518, PubMed:11533264, PubMed:16275639, PubMed:16443825, PubMed:26098370). Gives rise to a mixture of 16:1 and 18:1 unsaturated fatty acids (PubMed:11500518, PubMed:11533264, PubMed:16443825, PubMed:26098370). Plays an important role in lipid biosynthesis (PubMed:10899171, PubMed:11441127, PubMed:11500518, PubMed:11533264, PubMed:12177411, PubMed:17127673, PubMed:26098370). Plays an important role in regulating the expression of genes that are involved in lipogenesis and in regulating mitochondrial fatty acid oxidation (PubMed:12177411, PubMed:17127673, PubMed:24295027, PubMed:24356954). Plays an important role in body energy homeostasis (PubMed:15210843, PubMed:17127673, PubMed:24295027, PubMed:24356954). Contributes to the biosynthesis of membrane phospholipids, cholesterol esters and triglycerides (PubMed:10899171, PubMed:11441127, PubMed:11500518, PubMed:11533264, PubMed:12177411, PubMed:15210843, PubMed:26098370). Required for normal development of sebaceous glands (PubMed:11533264, PubMed:17738154). Required for the biosynthesis of normal levels of Delta-9 unsaturated fatty acids and 1-alkyl-2,3-diacylglycerol in the Harderian gland (PubMed:11500518). Required for normal production of meibum, an oily material that prevents drying of the cornea (PubMed:11533264).</text>
</comment>
<comment type="catalytic activity">
    <reaction evidence="4 7 8 13 14 17">
        <text>octadecanoyl-CoA + 2 Fe(II)-[cytochrome b5] + O2 + 2 H(+) = (9Z)-octadecenoyl-CoA + 2 Fe(III)-[cytochrome b5] + 2 H2O</text>
        <dbReference type="Rhea" id="RHEA:19721"/>
        <dbReference type="Rhea" id="RHEA-COMP:10438"/>
        <dbReference type="Rhea" id="RHEA-COMP:10439"/>
        <dbReference type="ChEBI" id="CHEBI:15377"/>
        <dbReference type="ChEBI" id="CHEBI:15378"/>
        <dbReference type="ChEBI" id="CHEBI:15379"/>
        <dbReference type="ChEBI" id="CHEBI:29033"/>
        <dbReference type="ChEBI" id="CHEBI:29034"/>
        <dbReference type="ChEBI" id="CHEBI:57387"/>
        <dbReference type="ChEBI" id="CHEBI:57394"/>
        <dbReference type="EC" id="1.14.19.1"/>
    </reaction>
</comment>
<comment type="cofactor">
    <cofactor evidence="26">
        <name>Fe(2+)</name>
        <dbReference type="ChEBI" id="CHEBI:29033"/>
    </cofactor>
    <text evidence="26">Expected to bind 2 Fe(2+) ions per subunit, instead of the Zn(2+) ions seen in the 3D-structure.</text>
</comment>
<comment type="subcellular location">
    <subcellularLocation>
        <location evidence="13 23">Endoplasmic reticulum membrane</location>
        <topology evidence="13">Multi-pass membrane protein</topology>
    </subcellularLocation>
    <subcellularLocation>
        <location evidence="4 7 8 14">Microsome membrane</location>
    </subcellularLocation>
</comment>
<comment type="tissue specificity">
    <text evidence="2 4 6 7 8 10">Detected in liver (at protein level) (PubMed:10899171, PubMed:11533264). Detected in skin and liver (PubMed:10545940, PubMed:11161812, PubMed:11441127, PubMed:11533264). Detected in sebaceous gland, but not in hair follicle (PubMed:10545940). Detected in white and brown adipose tissue, eyelid, Harderian gland, and at lower levels in Meibomian gland, eyeball and adrenal gland (PubMed:11500518, PubMed:11533264). Highly expressed in liver, and detected at low levels in brain, heart, lung, stomach, skeletal muscle and kidney (PubMed:11161812, PubMed:12815040).</text>
</comment>
<comment type="developmental stage">
    <text evidence="2 5">Up-regulated during the early anagen phase of the hair cycle. Thereafter, levels decrease and are very low at telogen phase.</text>
</comment>
<comment type="induction">
    <text evidence="6 10 15">Up-regulated by agonists that activate NR1H3 (PubMed:12815040). Up-regulated by a high-carbohydrate diet (PubMed:11441127). Up-regulated by a fat-free, high-carbohydrate diet (PubMed:12815040). Down-regulated by a high-carbohydrate diet enriched in unsaturated fatty acids (PubMed:12815040). Up-regulated by a diet containing high levels of stearate (PubMed:17127673).</text>
</comment>
<comment type="domain">
    <text evidence="17">The histidine box domains are involved in binding the catalytic metal ions.</text>
</comment>
<comment type="disease">
    <text evidence="2 3 4 6 8 12 16">Defects is Scd1 are the cause of asebia (ab) (PubMed:10545940, PubMed:10854228, PubMed:10899171, PubMed:15278437, PubMed:17738154). The trait is due to spontaneous autosomal recessive mutations that give rise to deletions or point mutations in Scd1. The ab trait has complete penetrance (PubMed:17738154). Ab mice are characterized by reduced body weight, extreme sebaceous gland hypoplasia leading to nearly complete absence of sebaceous glands, and thickened, scaly skin with hyperkeratosis and alopecia (PubMed:10854228, PubMed:15278437, PubMed:17738154). The hair follicles are abnormally long and extend at a sharp angle into the subcutis, probably due to abnormal persistence of inner root sheath. Frequently the hair shaft ruptures through the base of the hair follicle, giving rise to inflammation that results in scarring alopecia (PubMed:10854228, PubMed:15278437). Besides, ab mice display increased transepithelial water loss (PubMed:10854228). Ab mice present a narrow eye fissure and their eyes are nearly closed (PubMed:10854228, PubMed:15278437). Older mice develop blindness (PubMed:17738154). Scd1 activity is almost absent in liver, and is not compensated by expression of another family member (PubMed:10899171). Liver levels of total cholesterol esters are decreased by 87%, while plasma cholesterol levels are increased by 35% (PubMed:10899171). Likewise, skin sterol esters and diol diesters are strongly reduced (PubMed:10854228). Liver triglyceride levels are decreased by 62%, while plasma triglyceride levels are decreased by 67% (PubMed:10899171). The fatty acid composition of liver triglycerides is altered, with a decrease of about 85% in palmitoleate (C16:1) and oleate (C18:1) levels (PubMed:10899171). These defects cannot be compensated by a diet enriched in unsaturated fatty acids (PubMed:10899171, PubMed:11441127).</text>
</comment>
<comment type="disruption phenotype">
    <text evidence="7 8 9 11 15">Mice are viable and fertile (PubMed:11533264). Compared to wild-type, they consume about 25% more food, but are leaner and acumulate less white adipose tissue (PubMed:12177411, PubMed:17127673). Their liver glycogen levels are lower than wild-type, except when their diet is supplemented with high levels of triolein (PubMed:17127673). They gain weight and accumulate white adipose tissue when their diet contains high levels of triolein (PubMed:17127673). They loose weight on a diet rich in tristearin, contrary to wild-type (PubMed:17127673). Mutant mice cannot maintain their body temperature when exposed to cold; they display hypoglycemia, depleted liver glycogen levels, and die of hypothermia (PubMed:15210843). Mutant mice display increased levels of mitochondrial fatty acid oxidation and decreased expression of genes that are important for de novo lipogenesis, especially when their diet is enriched in saturated fatty acids (PubMed:12177411, PubMed:17127673). Their brown adipose tissues shows increased lipolysis and fatty acid oxidation (PubMed:15210843). They display increased metabolic rates during the day and the night (PubMed:12177411). Liver, skin and white adipose tissue from mutant mice show strongly decreased levels of palmitoleate and reduced levels of oleate, with increased levels of saturated fatty acids (PubMed:11533264). Likewise, skin and eyelids are deficient in cholesterol esters, wax esters and triglycerides (PubMed:11533264). These defects cannot be compensated by a diet enriched in unsaturated fatty acids (PubMed:11533264). Mutant mice have decreased levels of liver and plasma triglycerides (PubMed:17127673). Likewise, the levels of triglycerides, 1,2-diacylglycerol and free fatty acids are decreased in the brown adipose tissue (PubMed:15210843). Besides, brown adipose tissue, liver and plasma triglycerides are depleted in unsaturated fatty acids and are enriched in saturated fatty acids (PubMed:15210843, PubMed:17127673). A diet enriched in triolein increases liver and plasma levels of triglycerides (PubMed:17127673). Mutant mice display lower fasting insulin levels, normal fasting glucose levels, increased glucose tolerance and increased insulin sensitivity (PubMed:12177411). Mutant mice display alopecia and atrophy of sebaceous glands and Meibomian glands (PubMed:11533264). Besides, they present a narrow eye fissure and their eyes are nearly closed (PubMed:11533264). This eye phenotype is probably due to a defect in the production of meibum, the oily material that prevents drying of the cornea. Scd1 activity is almost absent in liver, and is not compensated by expression of another family member (PubMed:11533264). Strongly reduced levels of lipids containing Delta-9 unsaturated fatty acids in the Harderian gland, leading to strongly reduced levels of 1-alkyl-2,3-diacylglycerol in the Harderian gland (PubMed:11500518).</text>
</comment>
<comment type="similarity">
    <text evidence="21">Belongs to the fatty acid desaturase type 1 family.</text>
</comment>
<accession>P13516</accession>
<accession>Q922I6</accession>
<name>ACOD1_MOUSE</name>
<dbReference type="EC" id="1.14.19.1" evidence="4 7 8 13 14 17"/>
<dbReference type="EMBL" id="M21285">
    <property type="protein sequence ID" value="AAA40103.1"/>
    <property type="molecule type" value="Genomic_DNA"/>
</dbReference>
<dbReference type="EMBL" id="M21280">
    <property type="protein sequence ID" value="AAA40103.1"/>
    <property type="status" value="JOINED"/>
    <property type="molecule type" value="Genomic_DNA"/>
</dbReference>
<dbReference type="EMBL" id="M21281">
    <property type="protein sequence ID" value="AAA40103.1"/>
    <property type="status" value="JOINED"/>
    <property type="molecule type" value="Genomic_DNA"/>
</dbReference>
<dbReference type="EMBL" id="M21282">
    <property type="protein sequence ID" value="AAA40103.1"/>
    <property type="status" value="JOINED"/>
    <property type="molecule type" value="Genomic_DNA"/>
</dbReference>
<dbReference type="EMBL" id="M21283">
    <property type="protein sequence ID" value="AAA40103.1"/>
    <property type="status" value="JOINED"/>
    <property type="molecule type" value="Genomic_DNA"/>
</dbReference>
<dbReference type="EMBL" id="M21284">
    <property type="protein sequence ID" value="AAA40103.1"/>
    <property type="status" value="JOINED"/>
    <property type="molecule type" value="Genomic_DNA"/>
</dbReference>
<dbReference type="EMBL" id="BC007474">
    <property type="protein sequence ID" value="AAH07474.1"/>
    <property type="molecule type" value="mRNA"/>
</dbReference>
<dbReference type="EMBL" id="BC055453">
    <property type="protein sequence ID" value="AAH55453.1"/>
    <property type="molecule type" value="mRNA"/>
</dbReference>
<dbReference type="CCDS" id="CCDS29850.1"/>
<dbReference type="PIR" id="A32115">
    <property type="entry name" value="A32115"/>
</dbReference>
<dbReference type="RefSeq" id="NP_033153.2">
    <property type="nucleotide sequence ID" value="NM_009127.4"/>
</dbReference>
<dbReference type="PDB" id="4YMK">
    <property type="method" value="X-ray"/>
    <property type="resolution" value="2.60 A"/>
    <property type="chains" value="A/D=24-355"/>
</dbReference>
<dbReference type="PDB" id="6WF2">
    <property type="method" value="X-ray"/>
    <property type="resolution" value="3.51 A"/>
    <property type="chains" value="A/B=24-355"/>
</dbReference>
<dbReference type="PDBsum" id="4YMK"/>
<dbReference type="PDBsum" id="6WF2"/>
<dbReference type="SMR" id="P13516"/>
<dbReference type="BioGRID" id="203088">
    <property type="interactions" value="1"/>
</dbReference>
<dbReference type="FunCoup" id="P13516">
    <property type="interactions" value="824"/>
</dbReference>
<dbReference type="STRING" id="10090.ENSMUSP00000036936"/>
<dbReference type="BindingDB" id="P13516"/>
<dbReference type="ChEMBL" id="CHEMBL5353"/>
<dbReference type="iPTMnet" id="P13516"/>
<dbReference type="PhosphoSitePlus" id="P13516"/>
<dbReference type="SwissPalm" id="P13516"/>
<dbReference type="jPOST" id="P13516"/>
<dbReference type="PaxDb" id="10090-ENSMUSP00000036936"/>
<dbReference type="PeptideAtlas" id="P13516"/>
<dbReference type="ProteomicsDB" id="285595"/>
<dbReference type="Pumba" id="P13516"/>
<dbReference type="DNASU" id="20249"/>
<dbReference type="Ensembl" id="ENSMUST00000041331.4">
    <property type="protein sequence ID" value="ENSMUSP00000036936.3"/>
    <property type="gene ID" value="ENSMUSG00000037071.4"/>
</dbReference>
<dbReference type="GeneID" id="20249"/>
<dbReference type="KEGG" id="mmu:20249"/>
<dbReference type="UCSC" id="uc008hpr.2">
    <property type="organism name" value="mouse"/>
</dbReference>
<dbReference type="AGR" id="MGI:98239"/>
<dbReference type="CTD" id="20249"/>
<dbReference type="MGI" id="MGI:98239">
    <property type="gene designation" value="Scd1"/>
</dbReference>
<dbReference type="VEuPathDB" id="HostDB:ENSMUSG00000037071"/>
<dbReference type="eggNOG" id="KOG1600">
    <property type="taxonomic scope" value="Eukaryota"/>
</dbReference>
<dbReference type="GeneTree" id="ENSGT00940000162971"/>
<dbReference type="HOGENOM" id="CLU_027359_0_0_1"/>
<dbReference type="InParanoid" id="P13516"/>
<dbReference type="OMA" id="VIDWTEY"/>
<dbReference type="OrthoDB" id="10260134at2759"/>
<dbReference type="PhylomeDB" id="P13516"/>
<dbReference type="TreeFam" id="TF313251"/>
<dbReference type="BRENDA" id="1.14.19.1">
    <property type="organism ID" value="3474"/>
</dbReference>
<dbReference type="BioGRID-ORCS" id="20249">
    <property type="hits" value="6 hits in 79 CRISPR screens"/>
</dbReference>
<dbReference type="ChiTaRS" id="Scd1">
    <property type="organism name" value="mouse"/>
</dbReference>
<dbReference type="EvolutionaryTrace" id="P13516"/>
<dbReference type="PRO" id="PR:P13516"/>
<dbReference type="Proteomes" id="UP000000589">
    <property type="component" value="Chromosome 19"/>
</dbReference>
<dbReference type="RNAct" id="P13516">
    <property type="molecule type" value="protein"/>
</dbReference>
<dbReference type="Bgee" id="ENSMUSG00000037071">
    <property type="expression patterns" value="Expressed in thoracic mammary gland and 251 other cell types or tissues"/>
</dbReference>
<dbReference type="ExpressionAtlas" id="P13516">
    <property type="expression patterns" value="baseline and differential"/>
</dbReference>
<dbReference type="GO" id="GO:0005789">
    <property type="term" value="C:endoplasmic reticulum membrane"/>
    <property type="evidence" value="ECO:0000314"/>
    <property type="project" value="WormBase"/>
</dbReference>
<dbReference type="GO" id="GO:0005506">
    <property type="term" value="F:iron ion binding"/>
    <property type="evidence" value="ECO:0000250"/>
    <property type="project" value="UniProtKB"/>
</dbReference>
<dbReference type="GO" id="GO:0046872">
    <property type="term" value="F:metal ion binding"/>
    <property type="evidence" value="ECO:0000314"/>
    <property type="project" value="UniProtKB"/>
</dbReference>
<dbReference type="GO" id="GO:0032896">
    <property type="term" value="F:palmitoyl-CoA 9-desaturase activity"/>
    <property type="evidence" value="ECO:0000314"/>
    <property type="project" value="UniProtKB"/>
</dbReference>
<dbReference type="GO" id="GO:0004768">
    <property type="term" value="F:stearoyl-CoA 9-desaturase activity"/>
    <property type="evidence" value="ECO:0000314"/>
    <property type="project" value="UniProtKB"/>
</dbReference>
<dbReference type="GO" id="GO:0050873">
    <property type="term" value="P:brown fat cell differentiation"/>
    <property type="evidence" value="ECO:0000314"/>
    <property type="project" value="MGI"/>
</dbReference>
<dbReference type="GO" id="GO:0042632">
    <property type="term" value="P:cholesterol homeostasis"/>
    <property type="evidence" value="ECO:0000304"/>
    <property type="project" value="BHF-UCL"/>
</dbReference>
<dbReference type="GO" id="GO:0050830">
    <property type="term" value="P:defense response to Gram-positive bacterium"/>
    <property type="evidence" value="ECO:0000315"/>
    <property type="project" value="MGI"/>
</dbReference>
<dbReference type="GO" id="GO:0006633">
    <property type="term" value="P:fatty acid biosynthetic process"/>
    <property type="evidence" value="ECO:0000315"/>
    <property type="project" value="MGI"/>
</dbReference>
<dbReference type="GO" id="GO:0008610">
    <property type="term" value="P:lipid biosynthetic process"/>
    <property type="evidence" value="ECO:0000304"/>
    <property type="project" value="MGI"/>
</dbReference>
<dbReference type="GO" id="GO:0055088">
    <property type="term" value="P:lipid homeostasis"/>
    <property type="evidence" value="ECO:0000315"/>
    <property type="project" value="MGI"/>
</dbReference>
<dbReference type="GO" id="GO:1903966">
    <property type="term" value="P:monounsaturated fatty acid biosynthetic process"/>
    <property type="evidence" value="ECO:0000314"/>
    <property type="project" value="MGI"/>
</dbReference>
<dbReference type="GO" id="GO:0120162">
    <property type="term" value="P:positive regulation of cold-induced thermogenesis"/>
    <property type="evidence" value="ECO:0000315"/>
    <property type="project" value="YuBioLab"/>
</dbReference>
<dbReference type="GO" id="GO:0009617">
    <property type="term" value="P:response to bacterium"/>
    <property type="evidence" value="ECO:0000270"/>
    <property type="project" value="MGI"/>
</dbReference>
<dbReference type="GO" id="GO:0070542">
    <property type="term" value="P:response to fatty acid"/>
    <property type="evidence" value="ECO:0007669"/>
    <property type="project" value="Ensembl"/>
</dbReference>
<dbReference type="GO" id="GO:0007584">
    <property type="term" value="P:response to nutrient"/>
    <property type="evidence" value="ECO:0007669"/>
    <property type="project" value="Ensembl"/>
</dbReference>
<dbReference type="GO" id="GO:0048733">
    <property type="term" value="P:sebaceous gland development"/>
    <property type="evidence" value="ECO:0000315"/>
    <property type="project" value="UniProtKB"/>
</dbReference>
<dbReference type="GO" id="GO:0055092">
    <property type="term" value="P:sterol homeostasis"/>
    <property type="evidence" value="ECO:0000315"/>
    <property type="project" value="GO_Central"/>
</dbReference>
<dbReference type="GO" id="GO:1903699">
    <property type="term" value="P:tarsal gland development"/>
    <property type="evidence" value="ECO:0000315"/>
    <property type="project" value="UniProtKB"/>
</dbReference>
<dbReference type="GO" id="GO:0006641">
    <property type="term" value="P:triglyceride metabolic process"/>
    <property type="evidence" value="ECO:0000315"/>
    <property type="project" value="UniProtKB"/>
</dbReference>
<dbReference type="GO" id="GO:0006636">
    <property type="term" value="P:unsaturated fatty acid biosynthetic process"/>
    <property type="evidence" value="ECO:0007669"/>
    <property type="project" value="Ensembl"/>
</dbReference>
<dbReference type="GO" id="GO:0050872">
    <property type="term" value="P:white fat cell differentiation"/>
    <property type="evidence" value="ECO:0000314"/>
    <property type="project" value="MGI"/>
</dbReference>
<dbReference type="CDD" id="cd03505">
    <property type="entry name" value="Delta9-FADS-like"/>
    <property type="match status" value="1"/>
</dbReference>
<dbReference type="InterPro" id="IPR015876">
    <property type="entry name" value="Acyl-CoA_DS"/>
</dbReference>
<dbReference type="InterPro" id="IPR005804">
    <property type="entry name" value="FA_desaturase_dom"/>
</dbReference>
<dbReference type="InterPro" id="IPR001522">
    <property type="entry name" value="FADS-1_CS"/>
</dbReference>
<dbReference type="PANTHER" id="PTHR11351">
    <property type="entry name" value="ACYL-COA DESATURASE"/>
    <property type="match status" value="1"/>
</dbReference>
<dbReference type="PANTHER" id="PTHR11351:SF102">
    <property type="entry name" value="STEAROYL-COA DESATURASE"/>
    <property type="match status" value="1"/>
</dbReference>
<dbReference type="Pfam" id="PF00487">
    <property type="entry name" value="FA_desaturase"/>
    <property type="match status" value="1"/>
</dbReference>
<dbReference type="PRINTS" id="PR00075">
    <property type="entry name" value="FACDDSATRASE"/>
</dbReference>
<dbReference type="PROSITE" id="PS00476">
    <property type="entry name" value="FATTY_ACID_DESATUR_1"/>
    <property type="match status" value="1"/>
</dbReference>
<sequence length="355" mass="41046">MPAHMLQEISSSYTTTTTITAPPSGNEREKVKTVPLHLEEDIRPEMKEDIHDPTYQDEEGPPPKLEYVWRNIILMVLLHLGGLYGIILVPSCKLYTCLFGIFYYMTSALGITAGAHRLWSHRTYKARLPLRIFLIIANTMAFQNDVYEWARDHRAHHKFSETHADPHNSRRGFFFSHVGWLLVRKHPAVKEKGGKLDMSDLKAEKLVMFQRRYYKPGLLLMCFILPTLVPWYCWGETFVNSLFVSTFLRYTLVLNATWLVNSAAHLYGYRPYDKNIQSRENILVSLGAVGEGFHNYHHTFPFDYSASEYRWHINFTTFFIDCMAALGLAYDRKKVSKATVLARIKRTGDGSHKSS</sequence>
<gene>
    <name type="primary">Scd1</name>
</gene>
<organism>
    <name type="scientific">Mus musculus</name>
    <name type="common">Mouse</name>
    <dbReference type="NCBI Taxonomy" id="10090"/>
    <lineage>
        <taxon>Eukaryota</taxon>
        <taxon>Metazoa</taxon>
        <taxon>Chordata</taxon>
        <taxon>Craniata</taxon>
        <taxon>Vertebrata</taxon>
        <taxon>Euteleostomi</taxon>
        <taxon>Mammalia</taxon>
        <taxon>Eutheria</taxon>
        <taxon>Euarchontoglires</taxon>
        <taxon>Glires</taxon>
        <taxon>Rodentia</taxon>
        <taxon>Myomorpha</taxon>
        <taxon>Muroidea</taxon>
        <taxon>Muridae</taxon>
        <taxon>Murinae</taxon>
        <taxon>Mus</taxon>
        <taxon>Mus</taxon>
    </lineage>
</organism>
<keyword id="KW-0002">3D-structure</keyword>
<keyword id="KW-0225">Disease variant</keyword>
<keyword id="KW-0256">Endoplasmic reticulum</keyword>
<keyword id="KW-0275">Fatty acid biosynthesis</keyword>
<keyword id="KW-0276">Fatty acid metabolism</keyword>
<keyword id="KW-0408">Iron</keyword>
<keyword id="KW-0444">Lipid biosynthesis</keyword>
<keyword id="KW-0443">Lipid metabolism</keyword>
<keyword id="KW-0472">Membrane</keyword>
<keyword id="KW-0479">Metal-binding</keyword>
<keyword id="KW-0492">Microsome</keyword>
<keyword id="KW-0560">Oxidoreductase</keyword>
<keyword id="KW-1185">Reference proteome</keyword>
<keyword id="KW-0812">Transmembrane</keyword>
<keyword id="KW-1133">Transmembrane helix</keyword>
<reference key="1">
    <citation type="journal article" date="1988" name="J. Biol. Chem.">
        <title>Differentiation-induced gene expression in 3T3-L1 preadipocytes. Characterization of a differentially expressed gene encoding stearoyl-CoA desaturase.</title>
        <authorList>
            <person name="Ntambi J.M."/>
            <person name="Buhrow S.A."/>
            <person name="Kaestner K.H."/>
            <person name="Christy R.J."/>
            <person name="Sibley E."/>
            <person name="Kelly T.J. Jr."/>
            <person name="Lane M.D."/>
        </authorList>
    </citation>
    <scope>NUCLEOTIDE SEQUENCE [GENOMIC DNA]</scope>
    <source>
        <tissue>Adipocyte</tissue>
    </source>
</reference>
<reference key="2">
    <citation type="journal article" date="2004" name="Genome Res.">
        <title>The status, quality, and expansion of the NIH full-length cDNA project: the Mammalian Gene Collection (MGC).</title>
        <authorList>
            <consortium name="The MGC Project Team"/>
        </authorList>
    </citation>
    <scope>NUCLEOTIDE SEQUENCE [LARGE SCALE MRNA]</scope>
    <source>
        <tissue>Mammary gland</tissue>
    </source>
</reference>
<reference key="3">
    <citation type="journal article" date="1965" name="Science">
        <title>Hereditary absence of sebaceous glands in the mouse.</title>
        <authorList>
            <person name="Gates A.H."/>
            <person name="Karasek M."/>
        </authorList>
    </citation>
    <scope>INVOLVEMENT IN AB</scope>
</reference>
<reference key="4">
    <citation type="journal article" date="1999" name="Nat. Genet.">
        <title>Scd1 is expressed in sebaceous glands and is disrupted in the asebia mouse.</title>
        <authorList>
            <person name="Zheng Y."/>
            <person name="Eilertsen K.J."/>
            <person name="Ge L."/>
            <person name="Zhang L."/>
            <person name="Sundberg J.P."/>
            <person name="Prouty S.M."/>
            <person name="Stenn K.S."/>
            <person name="Parimoo S."/>
        </authorList>
    </citation>
    <scope>DISEASE</scope>
    <scope>TISSUE SPECIFICITY</scope>
    <scope>DEVELOPMENTAL STAGE</scope>
    <scope>FUNCTION</scope>
</reference>
<reference key="5">
    <citation type="journal article" date="2000" name="Am. J. Pathol.">
        <title>Asebia-2J (Scd1(ab2J)): a new allele and a model for scarring alopecia.</title>
        <authorList>
            <person name="Sundberg J.P."/>
            <person name="Boggess D."/>
            <person name="Sundberg B.A."/>
            <person name="Eilertsen K."/>
            <person name="Parimoo S."/>
            <person name="Filippi M."/>
            <person name="Stenn K."/>
        </authorList>
    </citation>
    <scope>DISEASE</scope>
</reference>
<reference key="6">
    <citation type="journal article" date="2000" name="J. Biol. Chem.">
        <title>The biosynthesis of hepatic cholesterol esters and triglycerides is impaired in mice with a disruption of the gene for stearoyl-CoA desaturase 1.</title>
        <authorList>
            <person name="Miyazaki M."/>
            <person name="Kim Y.C."/>
            <person name="Gray-Keller M.P."/>
            <person name="Attie A.D."/>
            <person name="Ntambi J.M."/>
        </authorList>
    </citation>
    <scope>FUNCTION</scope>
    <scope>CATALYTIC ACTIVITY</scope>
    <scope>DISEASE</scope>
    <scope>TISSUE SPECIFICITY</scope>
    <scope>SUBCELLULAR LOCATION</scope>
</reference>
<reference key="7">
    <citation type="journal article" date="2001" name="Genomics">
        <title>Scd3--a novel gene of the stearoyl-CoA desaturase family with restricted expression in skin.</title>
        <authorList>
            <person name="Zheng Y."/>
            <person name="Prouty S.M."/>
            <person name="Harmon A."/>
            <person name="Sundberg J.P."/>
            <person name="Stenn K.S."/>
            <person name="Parimoo S."/>
        </authorList>
    </citation>
    <scope>TISSUE SPECIFICITY</scope>
    <scope>DEVELOPMENTAL STAGE</scope>
</reference>
<reference key="8">
    <citation type="journal article" date="2001" name="J. Biol. Chem.">
        <title>Oleoyl-CoA is the major de novo product of stearoyl-CoA desaturase 1 gene isoform and substrate for the biosynthesis of the Harderian gland 1-alkyl-2,3-diacylglycerol.</title>
        <authorList>
            <person name="Miyazaki M."/>
            <person name="Kim H.J."/>
            <person name="Man W.C."/>
            <person name="Ntambi J.M."/>
        </authorList>
    </citation>
    <scope>FUNCTION</scope>
    <scope>CATALYTIC ACTIVITY</scope>
    <scope>DISRUPTION PHENOTYPE</scope>
    <scope>TISSUE SPECIFICITY</scope>
    <scope>SUBCELLULAR LOCATION</scope>
</reference>
<reference key="9">
    <citation type="journal article" date="2001" name="J. Lipid Res.">
        <title>A lipogenic diet in mice with a disruption of the stearoyl-CoA desaturase 1 gene reveals a stringent requirement of endogenous monounsaturated fatty acids for triglyceride synthesis.</title>
        <authorList>
            <person name="Miyazaki M."/>
            <person name="Kim Y.C."/>
            <person name="Ntambi J.M."/>
        </authorList>
    </citation>
    <scope>DISEASE</scope>
    <scope>FUNCTION</scope>
    <scope>INDUCTION BY HIGH-CARBOHYDRATE DIET</scope>
    <scope>TISSUE SPECIFICITY</scope>
</reference>
<reference key="10">
    <citation type="journal article" date="2001" name="J. Nutr.">
        <title>Targeted disruption of stearoyl-CoA desaturase1 gene in mice causes atrophy of sebaceous and meibomian glands and depletion of wax esters in the eyelid.</title>
        <authorList>
            <person name="Miyazaki M."/>
            <person name="Man W.C."/>
            <person name="Ntambi J.M."/>
        </authorList>
    </citation>
    <scope>FUNCTION</scope>
    <scope>CATALYTIC ACTIVITY</scope>
    <scope>DISRUPTION PHENOTYPE</scope>
    <scope>TISSUE SPECIFICITY</scope>
    <scope>SUBCELLULAR LOCATION</scope>
</reference>
<reference key="11">
    <citation type="journal article" date="2002" name="Proc. Natl. Acad. Sci. U.S.A.">
        <title>Loss of stearoyl-CoA desaturase-1 function protects mice against adiposity.</title>
        <authorList>
            <person name="Ntambi J.M."/>
            <person name="Miyazaki M."/>
            <person name="Stoehr J.P."/>
            <person name="Lan H."/>
            <person name="Kendziorski C.M."/>
            <person name="Yandell B.S."/>
            <person name="Song Y."/>
            <person name="Cohen P."/>
            <person name="Friedman J.M."/>
            <person name="Attie A.D."/>
        </authorList>
    </citation>
    <scope>DISRUPTION PHENOTYPE</scope>
    <scope>FUNCTION</scope>
</reference>
<reference key="12">
    <citation type="journal article" date="2003" name="J. Biol. Chem.">
        <title>Identification and characterization of murine SCD4, a novel heart-specific stearoyl-CoA desaturase isoform regulated by leptin and dietary factors.</title>
        <authorList>
            <person name="Miyazaki M."/>
            <person name="Jacobson M.J."/>
            <person name="Man W.C."/>
            <person name="Cohen P."/>
            <person name="Asilmaz E."/>
            <person name="Friedman J.M."/>
            <person name="Ntambi J.M."/>
        </authorList>
    </citation>
    <scope>INDUCTION BY HIGH CARBOHYDRATE; UNSATURATED FATTY ACIDS AND NR1H3 AGONISTS</scope>
    <scope>TISSUE SPECIFICITY</scope>
</reference>
<reference key="13">
    <citation type="journal article" date="2004" name="J. Lipid Res.">
        <title>Lack of stearoyl-CoA desaturase 1 upregulates basal thermogenesis but causes hypothermia in a cold environment.</title>
        <authorList>
            <person name="Lee S.H."/>
            <person name="Dobrzyn A."/>
            <person name="Dobrzyn P."/>
            <person name="Rahman S.M."/>
            <person name="Miyazaki M."/>
            <person name="Ntambi J.M."/>
        </authorList>
    </citation>
    <scope>DISRUPTION PHENOTYPE</scope>
    <scope>FUNCTION</scope>
</reference>
<reference key="14">
    <citation type="journal article" date="2004" name="Mol. Genet. Genomics">
        <title>Scd1ab-Xyk: a new asebia allele characterized by a CCC trinucleotide insertion in exon 5 of the stearoyl-CoA desaturase 1 gene in mouse.</title>
        <authorList>
            <person name="Lu Y."/>
            <person name="Bu L."/>
            <person name="Zhou S."/>
            <person name="Jin M."/>
            <person name="Sundberg J.P."/>
            <person name="Jiang H."/>
            <person name="Qian M."/>
            <person name="Shi Y."/>
            <person name="Zhao G."/>
            <person name="Kong X."/>
            <person name="Hu L."/>
        </authorList>
    </citation>
    <scope>DISEASE</scope>
    <scope>VARIANT AB PRO-278 INS</scope>
</reference>
<reference key="15">
    <citation type="journal article" date="2006" name="J. Biol. Chem.">
        <title>Membrane topology of mouse stearoyl-CoA desaturase 1.</title>
        <authorList>
            <person name="Man W.C."/>
            <person name="Miyazaki M."/>
            <person name="Chu K."/>
            <person name="Ntambi J.M."/>
        </authorList>
    </citation>
    <scope>SUBCELLULAR LOCATION</scope>
    <scope>MEMBRANE TOPOLOGY</scope>
</reference>
<reference key="16">
    <citation type="journal article" date="2006" name="J. Lipid Res.">
        <title>Identification of mouse palmitoyl-coenzyme A Delta9-desaturase.</title>
        <authorList>
            <person name="Miyazaki M."/>
            <person name="Bruggink S.M."/>
            <person name="Ntambi J.M."/>
        </authorList>
    </citation>
    <scope>FUNCTION</scope>
    <scope>CATALYTIC ACTIVITY</scope>
    <scope>SUBCELLULAR LOCATION</scope>
</reference>
<reference key="17">
    <citation type="journal article" date="2007" name="J. Biol. Chem.">
        <title>Stearoyl-CoA desaturase-1 mediates the pro-lipogenic effects of dietary saturated fat.</title>
        <authorList>
            <person name="Sampath H."/>
            <person name="Miyazaki M."/>
            <person name="Dobrzyn A."/>
            <person name="Ntambi J.M."/>
        </authorList>
    </citation>
    <scope>DISRUPTION PHENOTYPE</scope>
    <scope>FUNCTION</scope>
    <scope>INDUCTION BY DIETARY STEARATE</scope>
</reference>
<reference key="18">
    <citation type="journal article" date="2010" name="Cell">
        <title>A tissue-specific atlas of mouse protein phosphorylation and expression.</title>
        <authorList>
            <person name="Huttlin E.L."/>
            <person name="Jedrychowski M.P."/>
            <person name="Elias J.E."/>
            <person name="Goswami T."/>
            <person name="Rad R."/>
            <person name="Beausoleil S.A."/>
            <person name="Villen J."/>
            <person name="Haas W."/>
            <person name="Sowa M.E."/>
            <person name="Gygi S.P."/>
        </authorList>
    </citation>
    <scope>IDENTIFICATION BY MASS SPECTROMETRY [LARGE SCALE ANALYSIS]</scope>
    <source>
        <tissue>Brown adipose tissue</tissue>
        <tissue>Liver</tissue>
        <tissue>Lung</tissue>
    </source>
</reference>
<reference key="19">
    <citation type="journal article" date="2014" name="J. Biol. Chem.">
        <title>Role of stearoyl-CoA desaturase-1 in skin integrity and whole body energy balance.</title>
        <authorList>
            <person name="Sampath H."/>
            <person name="Ntambi J.M."/>
        </authorList>
    </citation>
    <scope>REVIEW</scope>
</reference>
<reference key="20">
    <citation type="journal article" date="2014" name="J. Med. Chem.">
        <title>Opportunities and challenges in developing stearoyl-coenzyme A desaturase-1 inhibitors as novel therapeutics for human disease.</title>
        <authorList>
            <person name="Zhang Z."/>
            <person name="Dales N.A."/>
            <person name="Winther M.D."/>
        </authorList>
    </citation>
    <scope>REVIEW</scope>
</reference>
<reference key="21">
    <citation type="journal article" date="2015" name="Nature">
        <title>X-ray structure of a mammalian stearoyl-CoA desaturase.</title>
        <authorList>
            <person name="Bai Y."/>
            <person name="McCoy J.G."/>
            <person name="Levin E.J."/>
            <person name="Sobrado P."/>
            <person name="Rajashankar K.R."/>
            <person name="Fox B.G."/>
            <person name="Zhou M."/>
        </authorList>
    </citation>
    <scope>X-RAY CRYSTALLOGRAPHY (2.61 ANGSTROMS) OF 24-355 IN COMPLEX WITH STEAROYL-COENZYME A AND ZINC IONS</scope>
    <scope>FUNCTION</scope>
    <scope>TOPOLOGY</scope>
    <scope>CATALYTIC ACTIVITY</scope>
    <scope>COFACTOR</scope>
</reference>
<proteinExistence type="evidence at protein level"/>
<evidence type="ECO:0000256" key="1">
    <source>
        <dbReference type="SAM" id="MobiDB-lite"/>
    </source>
</evidence>
<evidence type="ECO:0000269" key="2">
    <source>
    </source>
</evidence>
<evidence type="ECO:0000269" key="3">
    <source>
    </source>
</evidence>
<evidence type="ECO:0000269" key="4">
    <source>
    </source>
</evidence>
<evidence type="ECO:0000269" key="5">
    <source>
    </source>
</evidence>
<evidence type="ECO:0000269" key="6">
    <source>
    </source>
</evidence>
<evidence type="ECO:0000269" key="7">
    <source>
    </source>
</evidence>
<evidence type="ECO:0000269" key="8">
    <source>
    </source>
</evidence>
<evidence type="ECO:0000269" key="9">
    <source>
    </source>
</evidence>
<evidence type="ECO:0000269" key="10">
    <source>
    </source>
</evidence>
<evidence type="ECO:0000269" key="11">
    <source>
    </source>
</evidence>
<evidence type="ECO:0000269" key="12">
    <source>
    </source>
</evidence>
<evidence type="ECO:0000269" key="13">
    <source>
    </source>
</evidence>
<evidence type="ECO:0000269" key="14">
    <source>
    </source>
</evidence>
<evidence type="ECO:0000269" key="15">
    <source>
    </source>
</evidence>
<evidence type="ECO:0000269" key="16">
    <source>
    </source>
</evidence>
<evidence type="ECO:0000269" key="17">
    <source>
    </source>
</evidence>
<evidence type="ECO:0000303" key="18">
    <source>
    </source>
</evidence>
<evidence type="ECO:0000303" key="19">
    <source>
    </source>
</evidence>
<evidence type="ECO:0000303" key="20">
    <source>
    </source>
</evidence>
<evidence type="ECO:0000305" key="21"/>
<evidence type="ECO:0000305" key="22">
    <source>
    </source>
</evidence>
<evidence type="ECO:0000305" key="23">
    <source>
    </source>
</evidence>
<evidence type="ECO:0000305" key="24">
    <source>
    </source>
</evidence>
<evidence type="ECO:0000305" key="25">
    <source>
    </source>
</evidence>
<evidence type="ECO:0000305" key="26">
    <source>
    </source>
</evidence>
<evidence type="ECO:0007829" key="27">
    <source>
        <dbReference type="PDB" id="4YMK"/>
    </source>
</evidence>
<feature type="chain" id="PRO_0000185397" description="Acyl-CoA desaturase 1">
    <location>
        <begin position="1"/>
        <end position="355"/>
    </location>
</feature>
<feature type="topological domain" description="Cytoplasmic" evidence="22">
    <location>
        <begin position="1"/>
        <end position="68"/>
    </location>
</feature>
<feature type="transmembrane region" description="Helical" evidence="17">
    <location>
        <begin position="69"/>
        <end position="89"/>
    </location>
</feature>
<feature type="topological domain" description="Lumenal" evidence="26">
    <location>
        <begin position="90"/>
        <end position="93"/>
    </location>
</feature>
<feature type="transmembrane region" description="Helical" evidence="17">
    <location>
        <begin position="94"/>
        <end position="114"/>
    </location>
</feature>
<feature type="topological domain" description="Cytoplasmic" evidence="26">
    <location>
        <begin position="115"/>
        <end position="213"/>
    </location>
</feature>
<feature type="transmembrane region" description="Helical" evidence="17">
    <location>
        <begin position="214"/>
        <end position="233"/>
    </location>
</feature>
<feature type="topological domain" description="Lumenal" evidence="26">
    <location>
        <begin position="234"/>
        <end position="237"/>
    </location>
</feature>
<feature type="transmembrane region" description="Helical" evidence="17">
    <location>
        <begin position="238"/>
        <end position="259"/>
    </location>
</feature>
<feature type="topological domain" description="Cytoplasmic" evidence="22">
    <location>
        <begin position="260"/>
        <end position="355"/>
    </location>
</feature>
<feature type="region of interest" description="Disordered" evidence="1">
    <location>
        <begin position="9"/>
        <end position="33"/>
    </location>
</feature>
<feature type="short sequence motif" description="Histidine box-1" evidence="21">
    <location>
        <begin position="116"/>
        <end position="121"/>
    </location>
</feature>
<feature type="short sequence motif" description="Histidine box-2" evidence="21">
    <location>
        <begin position="153"/>
        <end position="157"/>
    </location>
</feature>
<feature type="short sequence motif" description="Histidine box-3" evidence="21">
    <location>
        <begin position="294"/>
        <end position="298"/>
    </location>
</feature>
<feature type="compositionally biased region" description="Low complexity" evidence="1">
    <location>
        <begin position="9"/>
        <end position="20"/>
    </location>
</feature>
<feature type="binding site" evidence="17">
    <location>
        <position position="71"/>
    </location>
    <ligand>
        <name>substrate</name>
    </ligand>
</feature>
<feature type="binding site" evidence="26">
    <location>
        <position position="116"/>
    </location>
    <ligand>
        <name>Fe cation</name>
        <dbReference type="ChEBI" id="CHEBI:24875"/>
        <label>1</label>
    </ligand>
</feature>
<feature type="binding site" evidence="26">
    <location>
        <position position="121"/>
    </location>
    <ligand>
        <name>Fe cation</name>
        <dbReference type="ChEBI" id="CHEBI:24875"/>
        <label>1</label>
    </ligand>
</feature>
<feature type="binding site" evidence="17">
    <location>
        <position position="144"/>
    </location>
    <ligand>
        <name>substrate</name>
    </ligand>
</feature>
<feature type="binding site" evidence="17">
    <location>
        <position position="151"/>
    </location>
    <ligand>
        <name>substrate</name>
    </ligand>
</feature>
<feature type="binding site" evidence="17">
    <location>
        <position position="152"/>
    </location>
    <ligand>
        <name>substrate</name>
    </ligand>
</feature>
<feature type="binding site" evidence="26">
    <location>
        <position position="153"/>
    </location>
    <ligand>
        <name>Fe cation</name>
        <dbReference type="ChEBI" id="CHEBI:24875"/>
        <label>1</label>
    </ligand>
</feature>
<feature type="binding site" evidence="26">
    <location>
        <position position="156"/>
    </location>
    <ligand>
        <name>Fe cation</name>
        <dbReference type="ChEBI" id="CHEBI:24875"/>
        <label>2</label>
    </ligand>
</feature>
<feature type="binding site" evidence="26">
    <location>
        <position position="157"/>
    </location>
    <ligand>
        <name>Fe cation</name>
        <dbReference type="ChEBI" id="CHEBI:24875"/>
        <label>1</label>
    </ligand>
</feature>
<feature type="binding site" evidence="17">
    <location>
        <position position="184"/>
    </location>
    <ligand>
        <name>substrate</name>
    </ligand>
</feature>
<feature type="binding site" evidence="17">
    <location>
        <position position="185"/>
    </location>
    <ligand>
        <name>substrate</name>
    </ligand>
</feature>
<feature type="binding site" evidence="17">
    <location>
        <position position="258"/>
    </location>
    <ligand>
        <name>substrate</name>
    </ligand>
</feature>
<feature type="binding site" evidence="26">
    <location>
        <position position="265"/>
    </location>
    <ligand>
        <name>Fe cation</name>
        <dbReference type="ChEBI" id="CHEBI:24875"/>
        <label>2</label>
    </ligand>
</feature>
<feature type="binding site" evidence="26">
    <location>
        <position position="294"/>
    </location>
    <ligand>
        <name>Fe cation</name>
        <dbReference type="ChEBI" id="CHEBI:24875"/>
        <label>2</label>
    </ligand>
</feature>
<feature type="binding site" evidence="26">
    <location>
        <position position="297"/>
    </location>
    <ligand>
        <name>Fe cation</name>
        <dbReference type="ChEBI" id="CHEBI:24875"/>
        <label>1</label>
    </ligand>
</feature>
<feature type="binding site" evidence="26">
    <location>
        <position position="298"/>
    </location>
    <ligand>
        <name>Fe cation</name>
        <dbReference type="ChEBI" id="CHEBI:24875"/>
        <label>2</label>
    </ligand>
</feature>
<feature type="sequence variant" description="In ab." evidence="12">
    <original>S</original>
    <variation>SP</variation>
    <location>
        <position position="278"/>
    </location>
</feature>
<feature type="sequence conflict" description="In Ref. 1; AAA40103." evidence="21" ref="1">
    <original>C</original>
    <variation>A</variation>
    <location>
        <position position="97"/>
    </location>
</feature>
<feature type="sequence conflict" description="In Ref. 1; AAA40103." evidence="21" ref="1">
    <original>E</original>
    <variation>D</variation>
    <location>
        <position position="148"/>
    </location>
</feature>
<feature type="strand" evidence="27">
    <location>
        <begin position="59"/>
        <end position="61"/>
    </location>
</feature>
<feature type="helix" evidence="27">
    <location>
        <begin position="69"/>
        <end position="86"/>
    </location>
</feature>
<feature type="helix" evidence="27">
    <location>
        <begin position="87"/>
        <end position="91"/>
    </location>
</feature>
<feature type="helix" evidence="27">
    <location>
        <begin position="94"/>
        <end position="112"/>
    </location>
</feature>
<feature type="helix" evidence="27">
    <location>
        <begin position="113"/>
        <end position="120"/>
    </location>
</feature>
<feature type="strand" evidence="27">
    <location>
        <begin position="124"/>
        <end position="126"/>
    </location>
</feature>
<feature type="helix" evidence="27">
    <location>
        <begin position="128"/>
        <end position="141"/>
    </location>
</feature>
<feature type="helix" evidence="27">
    <location>
        <begin position="146"/>
        <end position="158"/>
    </location>
</feature>
<feature type="turn" evidence="27">
    <location>
        <begin position="159"/>
        <end position="161"/>
    </location>
</feature>
<feature type="helix" evidence="27">
    <location>
        <begin position="169"/>
        <end position="171"/>
    </location>
</feature>
<feature type="helix" evidence="27">
    <location>
        <begin position="173"/>
        <end position="177"/>
    </location>
</feature>
<feature type="helix" evidence="27">
    <location>
        <begin position="179"/>
        <end position="181"/>
    </location>
</feature>
<feature type="helix" evidence="27">
    <location>
        <begin position="187"/>
        <end position="193"/>
    </location>
</feature>
<feature type="helix" evidence="27">
    <location>
        <begin position="199"/>
        <end position="202"/>
    </location>
</feature>
<feature type="helix" evidence="27">
    <location>
        <begin position="205"/>
        <end position="212"/>
    </location>
</feature>
<feature type="helix" evidence="27">
    <location>
        <begin position="214"/>
        <end position="222"/>
    </location>
</feature>
<feature type="helix" evidence="27">
    <location>
        <begin position="225"/>
        <end position="233"/>
    </location>
</feature>
<feature type="helix" evidence="27">
    <location>
        <begin position="238"/>
        <end position="243"/>
    </location>
</feature>
<feature type="turn" evidence="27">
    <location>
        <begin position="244"/>
        <end position="246"/>
    </location>
</feature>
<feature type="helix" evidence="27">
    <location>
        <begin position="247"/>
        <end position="258"/>
    </location>
</feature>
<feature type="turn" evidence="27">
    <location>
        <begin position="259"/>
        <end position="262"/>
    </location>
</feature>
<feature type="helix" evidence="27">
    <location>
        <begin position="263"/>
        <end position="265"/>
    </location>
</feature>
<feature type="strand" evidence="27">
    <location>
        <begin position="267"/>
        <end position="269"/>
    </location>
</feature>
<feature type="helix" evidence="27">
    <location>
        <begin position="282"/>
        <end position="287"/>
    </location>
</feature>
<feature type="turn" evidence="27">
    <location>
        <begin position="288"/>
        <end position="292"/>
    </location>
</feature>
<feature type="helix" evidence="27">
    <location>
        <begin position="294"/>
        <end position="299"/>
    </location>
</feature>
<feature type="strand" evidence="27">
    <location>
        <begin position="306"/>
        <end position="311"/>
    </location>
</feature>
<feature type="helix" evidence="27">
    <location>
        <begin position="315"/>
        <end position="325"/>
    </location>
</feature>
<feature type="strand" evidence="27">
    <location>
        <begin position="328"/>
        <end position="330"/>
    </location>
</feature>
<feature type="helix" evidence="27">
    <location>
        <begin position="337"/>
        <end position="347"/>
    </location>
</feature>
<feature type="helix" evidence="27">
    <location>
        <begin position="352"/>
        <end position="354"/>
    </location>
</feature>